<feature type="chain" id="PRO_0000272384" description="Large ribosomal subunit protein bL17">
    <location>
        <begin position="1"/>
        <end position="126"/>
    </location>
</feature>
<protein>
    <recommendedName>
        <fullName evidence="1">Large ribosomal subunit protein bL17</fullName>
    </recommendedName>
    <alternativeName>
        <fullName evidence="2">50S ribosomal protein L17</fullName>
    </alternativeName>
</protein>
<sequence length="126" mass="14302">MRHKIKGRKLNVTSSHRQAMLANMAVALVTHEQIKTTLPKAKELRPYIETLITKAKKADLTVRRSVLSKIKDKKAVEKLINILGTRYKDRPGGYTRIIKAGFRYGDLAPIAYIEFVDRDINAKGNI</sequence>
<comment type="subunit">
    <text evidence="1">Part of the 50S ribosomal subunit. Contacts protein L32.</text>
</comment>
<comment type="similarity">
    <text evidence="1">Belongs to the bacterial ribosomal protein bL17 family.</text>
</comment>
<keyword id="KW-0687">Ribonucleoprotein</keyword>
<keyword id="KW-0689">Ribosomal protein</keyword>
<dbReference type="EMBL" id="CP000053">
    <property type="protein sequence ID" value="AAY61154.1"/>
    <property type="molecule type" value="Genomic_DNA"/>
</dbReference>
<dbReference type="SMR" id="Q4UMQ4"/>
<dbReference type="STRING" id="315456.RF_0303"/>
<dbReference type="KEGG" id="rfe:RF_0303"/>
<dbReference type="eggNOG" id="COG0203">
    <property type="taxonomic scope" value="Bacteria"/>
</dbReference>
<dbReference type="HOGENOM" id="CLU_074407_2_0_5"/>
<dbReference type="OrthoDB" id="9809073at2"/>
<dbReference type="Proteomes" id="UP000008548">
    <property type="component" value="Chromosome"/>
</dbReference>
<dbReference type="GO" id="GO:0022625">
    <property type="term" value="C:cytosolic large ribosomal subunit"/>
    <property type="evidence" value="ECO:0007669"/>
    <property type="project" value="TreeGrafter"/>
</dbReference>
<dbReference type="GO" id="GO:0003735">
    <property type="term" value="F:structural constituent of ribosome"/>
    <property type="evidence" value="ECO:0007669"/>
    <property type="project" value="InterPro"/>
</dbReference>
<dbReference type="GO" id="GO:0006412">
    <property type="term" value="P:translation"/>
    <property type="evidence" value="ECO:0007669"/>
    <property type="project" value="UniProtKB-UniRule"/>
</dbReference>
<dbReference type="FunFam" id="3.90.1030.10:FF:000001">
    <property type="entry name" value="50S ribosomal protein L17"/>
    <property type="match status" value="1"/>
</dbReference>
<dbReference type="Gene3D" id="3.90.1030.10">
    <property type="entry name" value="Ribosomal protein L17"/>
    <property type="match status" value="1"/>
</dbReference>
<dbReference type="HAMAP" id="MF_01368">
    <property type="entry name" value="Ribosomal_bL17"/>
    <property type="match status" value="1"/>
</dbReference>
<dbReference type="InterPro" id="IPR000456">
    <property type="entry name" value="Ribosomal_bL17"/>
</dbReference>
<dbReference type="InterPro" id="IPR047859">
    <property type="entry name" value="Ribosomal_bL17_CS"/>
</dbReference>
<dbReference type="InterPro" id="IPR036373">
    <property type="entry name" value="Ribosomal_bL17_sf"/>
</dbReference>
<dbReference type="NCBIfam" id="TIGR00059">
    <property type="entry name" value="L17"/>
    <property type="match status" value="1"/>
</dbReference>
<dbReference type="PANTHER" id="PTHR14413:SF16">
    <property type="entry name" value="LARGE RIBOSOMAL SUBUNIT PROTEIN BL17M"/>
    <property type="match status" value="1"/>
</dbReference>
<dbReference type="PANTHER" id="PTHR14413">
    <property type="entry name" value="RIBOSOMAL PROTEIN L17"/>
    <property type="match status" value="1"/>
</dbReference>
<dbReference type="Pfam" id="PF01196">
    <property type="entry name" value="Ribosomal_L17"/>
    <property type="match status" value="1"/>
</dbReference>
<dbReference type="SUPFAM" id="SSF64263">
    <property type="entry name" value="Prokaryotic ribosomal protein L17"/>
    <property type="match status" value="1"/>
</dbReference>
<dbReference type="PROSITE" id="PS01167">
    <property type="entry name" value="RIBOSOMAL_L17"/>
    <property type="match status" value="1"/>
</dbReference>
<reference key="1">
    <citation type="journal article" date="2005" name="PLoS Biol.">
        <title>The genome sequence of Rickettsia felis identifies the first putative conjugative plasmid in an obligate intracellular parasite.</title>
        <authorList>
            <person name="Ogata H."/>
            <person name="Renesto P."/>
            <person name="Audic S."/>
            <person name="Robert C."/>
            <person name="Blanc G."/>
            <person name="Fournier P.-E."/>
            <person name="Parinello H."/>
            <person name="Claverie J.-M."/>
            <person name="Raoult D."/>
        </authorList>
    </citation>
    <scope>NUCLEOTIDE SEQUENCE [LARGE SCALE GENOMIC DNA]</scope>
    <source>
        <strain>ATCC VR-1525 / URRWXCal2</strain>
    </source>
</reference>
<organism>
    <name type="scientific">Rickettsia felis (strain ATCC VR-1525 / URRWXCal2)</name>
    <name type="common">Rickettsia azadi</name>
    <dbReference type="NCBI Taxonomy" id="315456"/>
    <lineage>
        <taxon>Bacteria</taxon>
        <taxon>Pseudomonadati</taxon>
        <taxon>Pseudomonadota</taxon>
        <taxon>Alphaproteobacteria</taxon>
        <taxon>Rickettsiales</taxon>
        <taxon>Rickettsiaceae</taxon>
        <taxon>Rickettsieae</taxon>
        <taxon>Rickettsia</taxon>
        <taxon>spotted fever group</taxon>
    </lineage>
</organism>
<proteinExistence type="inferred from homology"/>
<name>RL17_RICFE</name>
<accession>Q4UMQ4</accession>
<evidence type="ECO:0000255" key="1">
    <source>
        <dbReference type="HAMAP-Rule" id="MF_01368"/>
    </source>
</evidence>
<evidence type="ECO:0000305" key="2"/>
<gene>
    <name evidence="1" type="primary">rplQ</name>
    <name type="ordered locus">RF_0303</name>
</gene>